<name>COAD_NITWN</name>
<feature type="chain" id="PRO_1000011190" description="Phosphopantetheine adenylyltransferase">
    <location>
        <begin position="1"/>
        <end position="165"/>
    </location>
</feature>
<feature type="binding site" evidence="1">
    <location>
        <begin position="10"/>
        <end position="11"/>
    </location>
    <ligand>
        <name>ATP</name>
        <dbReference type="ChEBI" id="CHEBI:30616"/>
    </ligand>
</feature>
<feature type="binding site" evidence="1">
    <location>
        <position position="10"/>
    </location>
    <ligand>
        <name>substrate</name>
    </ligand>
</feature>
<feature type="binding site" evidence="1">
    <location>
        <position position="18"/>
    </location>
    <ligand>
        <name>ATP</name>
        <dbReference type="ChEBI" id="CHEBI:30616"/>
    </ligand>
</feature>
<feature type="binding site" evidence="1">
    <location>
        <position position="42"/>
    </location>
    <ligand>
        <name>substrate</name>
    </ligand>
</feature>
<feature type="binding site" evidence="1">
    <location>
        <position position="79"/>
    </location>
    <ligand>
        <name>substrate</name>
    </ligand>
</feature>
<feature type="binding site" evidence="1">
    <location>
        <position position="93"/>
    </location>
    <ligand>
        <name>substrate</name>
    </ligand>
</feature>
<feature type="binding site" evidence="1">
    <location>
        <begin position="94"/>
        <end position="96"/>
    </location>
    <ligand>
        <name>ATP</name>
        <dbReference type="ChEBI" id="CHEBI:30616"/>
    </ligand>
</feature>
<feature type="binding site" evidence="1">
    <location>
        <position position="104"/>
    </location>
    <ligand>
        <name>ATP</name>
        <dbReference type="ChEBI" id="CHEBI:30616"/>
    </ligand>
</feature>
<feature type="binding site" evidence="1">
    <location>
        <begin position="129"/>
        <end position="135"/>
    </location>
    <ligand>
        <name>ATP</name>
        <dbReference type="ChEBI" id="CHEBI:30616"/>
    </ligand>
</feature>
<feature type="site" description="Transition state stabilizer" evidence="1">
    <location>
        <position position="18"/>
    </location>
</feature>
<accession>Q3SRN1</accession>
<keyword id="KW-0067">ATP-binding</keyword>
<keyword id="KW-0173">Coenzyme A biosynthesis</keyword>
<keyword id="KW-0963">Cytoplasm</keyword>
<keyword id="KW-0460">Magnesium</keyword>
<keyword id="KW-0547">Nucleotide-binding</keyword>
<keyword id="KW-0548">Nucleotidyltransferase</keyword>
<keyword id="KW-1185">Reference proteome</keyword>
<keyword id="KW-0808">Transferase</keyword>
<dbReference type="EC" id="2.7.7.3" evidence="1"/>
<dbReference type="EMBL" id="CP000115">
    <property type="protein sequence ID" value="ABA05060.1"/>
    <property type="molecule type" value="Genomic_DNA"/>
</dbReference>
<dbReference type="RefSeq" id="WP_011315056.1">
    <property type="nucleotide sequence ID" value="NC_007406.1"/>
</dbReference>
<dbReference type="SMR" id="Q3SRN1"/>
<dbReference type="STRING" id="323098.Nwi_1799"/>
<dbReference type="KEGG" id="nwi:Nwi_1799"/>
<dbReference type="eggNOG" id="COG0669">
    <property type="taxonomic scope" value="Bacteria"/>
</dbReference>
<dbReference type="HOGENOM" id="CLU_100149_0_1_5"/>
<dbReference type="OrthoDB" id="9806661at2"/>
<dbReference type="UniPathway" id="UPA00241">
    <property type="reaction ID" value="UER00355"/>
</dbReference>
<dbReference type="Proteomes" id="UP000002531">
    <property type="component" value="Chromosome"/>
</dbReference>
<dbReference type="GO" id="GO:0005737">
    <property type="term" value="C:cytoplasm"/>
    <property type="evidence" value="ECO:0007669"/>
    <property type="project" value="UniProtKB-SubCell"/>
</dbReference>
<dbReference type="GO" id="GO:0005524">
    <property type="term" value="F:ATP binding"/>
    <property type="evidence" value="ECO:0007669"/>
    <property type="project" value="UniProtKB-KW"/>
</dbReference>
<dbReference type="GO" id="GO:0004595">
    <property type="term" value="F:pantetheine-phosphate adenylyltransferase activity"/>
    <property type="evidence" value="ECO:0007669"/>
    <property type="project" value="UniProtKB-UniRule"/>
</dbReference>
<dbReference type="GO" id="GO:0015937">
    <property type="term" value="P:coenzyme A biosynthetic process"/>
    <property type="evidence" value="ECO:0007669"/>
    <property type="project" value="UniProtKB-UniRule"/>
</dbReference>
<dbReference type="CDD" id="cd02163">
    <property type="entry name" value="PPAT"/>
    <property type="match status" value="1"/>
</dbReference>
<dbReference type="Gene3D" id="3.40.50.620">
    <property type="entry name" value="HUPs"/>
    <property type="match status" value="1"/>
</dbReference>
<dbReference type="HAMAP" id="MF_00151">
    <property type="entry name" value="PPAT_bact"/>
    <property type="match status" value="1"/>
</dbReference>
<dbReference type="InterPro" id="IPR004821">
    <property type="entry name" value="Cyt_trans-like"/>
</dbReference>
<dbReference type="InterPro" id="IPR001980">
    <property type="entry name" value="PPAT"/>
</dbReference>
<dbReference type="InterPro" id="IPR014729">
    <property type="entry name" value="Rossmann-like_a/b/a_fold"/>
</dbReference>
<dbReference type="NCBIfam" id="TIGR01510">
    <property type="entry name" value="coaD_prev_kdtB"/>
    <property type="match status" value="1"/>
</dbReference>
<dbReference type="NCBIfam" id="TIGR00125">
    <property type="entry name" value="cyt_tran_rel"/>
    <property type="match status" value="1"/>
</dbReference>
<dbReference type="PANTHER" id="PTHR21342">
    <property type="entry name" value="PHOSPHOPANTETHEINE ADENYLYLTRANSFERASE"/>
    <property type="match status" value="1"/>
</dbReference>
<dbReference type="PANTHER" id="PTHR21342:SF1">
    <property type="entry name" value="PHOSPHOPANTETHEINE ADENYLYLTRANSFERASE"/>
    <property type="match status" value="1"/>
</dbReference>
<dbReference type="Pfam" id="PF01467">
    <property type="entry name" value="CTP_transf_like"/>
    <property type="match status" value="1"/>
</dbReference>
<dbReference type="PRINTS" id="PR01020">
    <property type="entry name" value="LPSBIOSNTHSS"/>
</dbReference>
<dbReference type="SUPFAM" id="SSF52374">
    <property type="entry name" value="Nucleotidylyl transferase"/>
    <property type="match status" value="1"/>
</dbReference>
<proteinExistence type="inferred from homology"/>
<evidence type="ECO:0000255" key="1">
    <source>
        <dbReference type="HAMAP-Rule" id="MF_00151"/>
    </source>
</evidence>
<organism>
    <name type="scientific">Nitrobacter winogradskyi (strain ATCC 25391 / DSM 10237 / CIP 104748 / NCIMB 11846 / Nb-255)</name>
    <dbReference type="NCBI Taxonomy" id="323098"/>
    <lineage>
        <taxon>Bacteria</taxon>
        <taxon>Pseudomonadati</taxon>
        <taxon>Pseudomonadota</taxon>
        <taxon>Alphaproteobacteria</taxon>
        <taxon>Hyphomicrobiales</taxon>
        <taxon>Nitrobacteraceae</taxon>
        <taxon>Nitrobacter</taxon>
    </lineage>
</organism>
<gene>
    <name evidence="1" type="primary">coaD</name>
    <name type="ordered locus">Nwi_1799</name>
</gene>
<protein>
    <recommendedName>
        <fullName evidence="1">Phosphopantetheine adenylyltransferase</fullName>
        <ecNumber evidence="1">2.7.7.3</ecNumber>
    </recommendedName>
    <alternativeName>
        <fullName evidence="1">Dephospho-CoA pyrophosphorylase</fullName>
    </alternativeName>
    <alternativeName>
        <fullName evidence="1">Pantetheine-phosphate adenylyltransferase</fullName>
        <shortName evidence="1">PPAT</shortName>
    </alternativeName>
</protein>
<sequence length="165" mass="17486">MPRVALYPGSFDPVTNGHLDVVRHAVALCDRLIVAVGVHPGKTPVFSADDRLAMARSVFEPVAVEAGCAFDCVTYDDLTVAAAHKVGATILVRGLRDGTDLDYEMQIAGMNETMAPDVHTVFVPASPGVRPITATLVRQIATMGGDVSPFVPQLVASRLRTKFAG</sequence>
<reference key="1">
    <citation type="journal article" date="2006" name="Appl. Environ. Microbiol.">
        <title>Genome sequence of the chemolithoautotrophic nitrite-oxidizing bacterium Nitrobacter winogradskyi Nb-255.</title>
        <authorList>
            <person name="Starkenburg S.R."/>
            <person name="Chain P.S.G."/>
            <person name="Sayavedra-Soto L.A."/>
            <person name="Hauser L."/>
            <person name="Land M.L."/>
            <person name="Larimer F.W."/>
            <person name="Malfatti S.A."/>
            <person name="Klotz M.G."/>
            <person name="Bottomley P.J."/>
            <person name="Arp D.J."/>
            <person name="Hickey W.J."/>
        </authorList>
    </citation>
    <scope>NUCLEOTIDE SEQUENCE [LARGE SCALE GENOMIC DNA]</scope>
    <source>
        <strain>ATCC 25391 / DSM 10237 / CIP 104748 / NCIMB 11846 / Nb-255</strain>
    </source>
</reference>
<comment type="function">
    <text evidence="1">Reversibly transfers an adenylyl group from ATP to 4'-phosphopantetheine, yielding dephospho-CoA (dPCoA) and pyrophosphate.</text>
</comment>
<comment type="catalytic activity">
    <reaction evidence="1">
        <text>(R)-4'-phosphopantetheine + ATP + H(+) = 3'-dephospho-CoA + diphosphate</text>
        <dbReference type="Rhea" id="RHEA:19801"/>
        <dbReference type="ChEBI" id="CHEBI:15378"/>
        <dbReference type="ChEBI" id="CHEBI:30616"/>
        <dbReference type="ChEBI" id="CHEBI:33019"/>
        <dbReference type="ChEBI" id="CHEBI:57328"/>
        <dbReference type="ChEBI" id="CHEBI:61723"/>
        <dbReference type="EC" id="2.7.7.3"/>
    </reaction>
</comment>
<comment type="cofactor">
    <cofactor evidence="1">
        <name>Mg(2+)</name>
        <dbReference type="ChEBI" id="CHEBI:18420"/>
    </cofactor>
</comment>
<comment type="pathway">
    <text evidence="1">Cofactor biosynthesis; coenzyme A biosynthesis; CoA from (R)-pantothenate: step 4/5.</text>
</comment>
<comment type="subunit">
    <text evidence="1">Homohexamer.</text>
</comment>
<comment type="subcellular location">
    <subcellularLocation>
        <location evidence="1">Cytoplasm</location>
    </subcellularLocation>
</comment>
<comment type="similarity">
    <text evidence="1">Belongs to the bacterial CoaD family.</text>
</comment>